<reference key="1">
    <citation type="journal article" date="1998" name="Microbiology">
        <title>Unconventional organization of the division and cell wall gene cluster of Streptococcus pneumoniae.</title>
        <authorList>
            <person name="Massidda O."/>
            <person name="Anderluzzi D."/>
            <person name="Friedli L."/>
            <person name="Feger G."/>
        </authorList>
    </citation>
    <scope>NUCLEOTIDE SEQUENCE [GENOMIC DNA]</scope>
</reference>
<reference key="2">
    <citation type="journal article" date="2001" name="Microb. Drug Resist.">
        <title>Annotated draft genomic sequence from a Streptococcus pneumoniae type 19F clinical isolate.</title>
        <authorList>
            <person name="Dopazo J."/>
            <person name="Mendoza A."/>
            <person name="Herrero J."/>
            <person name="Caldara F."/>
            <person name="Humbert Y."/>
            <person name="Friedli L."/>
            <person name="Guerrier M."/>
            <person name="Grand-Schenk E."/>
            <person name="Gandin C."/>
            <person name="de Francesco M."/>
            <person name="Polissi A."/>
            <person name="Buell G."/>
            <person name="Feger G."/>
            <person name="Garcia E."/>
            <person name="Peitsch M."/>
            <person name="Garcia-Bustos J.F."/>
        </authorList>
    </citation>
    <scope>NUCLEOTIDE SEQUENCE [LARGE SCALE GENOMIC DNA]</scope>
    <source>
        <strain>G54</strain>
    </source>
</reference>
<reference key="3">
    <citation type="submission" date="2008-03" db="EMBL/GenBank/DDBJ databases">
        <title>Pneumococcal beta glucoside metabolism investigated by whole genome comparison.</title>
        <authorList>
            <person name="Mulas L."/>
            <person name="Trappetti C."/>
            <person name="Hakenbeck R."/>
            <person name="Iannelli F."/>
            <person name="Pozzi G."/>
            <person name="Davidsen T.M."/>
            <person name="Tettelin H."/>
            <person name="Oggioni M."/>
        </authorList>
    </citation>
    <scope>NUCLEOTIDE SEQUENCE [LARGE SCALE GENOMIC DNA]</scope>
    <source>
        <strain>G54</strain>
    </source>
</reference>
<feature type="chain" id="PRO_1000189201" description="Isoleucine--tRNA ligase">
    <location>
        <begin position="1"/>
        <end position="930"/>
    </location>
</feature>
<feature type="short sequence motif" description="'HIGH' region">
    <location>
        <begin position="57"/>
        <end position="67"/>
    </location>
</feature>
<feature type="short sequence motif" description="'KMSKS' region">
    <location>
        <begin position="595"/>
        <end position="599"/>
    </location>
</feature>
<feature type="binding site" evidence="1">
    <location>
        <position position="554"/>
    </location>
    <ligand>
        <name>L-isoleucyl-5'-AMP</name>
        <dbReference type="ChEBI" id="CHEBI:178002"/>
    </ligand>
</feature>
<feature type="binding site" evidence="1">
    <location>
        <position position="598"/>
    </location>
    <ligand>
        <name>ATP</name>
        <dbReference type="ChEBI" id="CHEBI:30616"/>
    </ligand>
</feature>
<feature type="binding site" evidence="1">
    <location>
        <position position="888"/>
    </location>
    <ligand>
        <name>Zn(2+)</name>
        <dbReference type="ChEBI" id="CHEBI:29105"/>
    </ligand>
</feature>
<feature type="binding site" evidence="1">
    <location>
        <position position="891"/>
    </location>
    <ligand>
        <name>Zn(2+)</name>
        <dbReference type="ChEBI" id="CHEBI:29105"/>
    </ligand>
</feature>
<feature type="binding site" evidence="1">
    <location>
        <position position="908"/>
    </location>
    <ligand>
        <name>Zn(2+)</name>
        <dbReference type="ChEBI" id="CHEBI:29105"/>
    </ligand>
</feature>
<feature type="binding site" evidence="1">
    <location>
        <position position="911"/>
    </location>
    <ligand>
        <name>Zn(2+)</name>
        <dbReference type="ChEBI" id="CHEBI:29105"/>
    </ligand>
</feature>
<organism>
    <name type="scientific">Streptococcus pneumoniae serotype 19F (strain G54)</name>
    <dbReference type="NCBI Taxonomy" id="512566"/>
    <lineage>
        <taxon>Bacteria</taxon>
        <taxon>Bacillati</taxon>
        <taxon>Bacillota</taxon>
        <taxon>Bacilli</taxon>
        <taxon>Lactobacillales</taxon>
        <taxon>Streptococcaceae</taxon>
        <taxon>Streptococcus</taxon>
    </lineage>
</organism>
<gene>
    <name evidence="1" type="primary">ileS</name>
    <name type="ordered locus">SPG_1568</name>
</gene>
<evidence type="ECO:0000255" key="1">
    <source>
        <dbReference type="HAMAP-Rule" id="MF_02002"/>
    </source>
</evidence>
<proteinExistence type="inferred from homology"/>
<protein>
    <recommendedName>
        <fullName evidence="1">Isoleucine--tRNA ligase</fullName>
        <ecNumber evidence="1">6.1.1.5</ecNumber>
    </recommendedName>
    <alternativeName>
        <fullName evidence="1">Isoleucyl-tRNA synthetase</fullName>
        <shortName evidence="1">IleRS</shortName>
    </alternativeName>
</protein>
<sequence length="930" mass="105512">MKLKDTLNLGKTEFPMRAGLPTKEPVWQKEWEDAKLYQRRQELNQGKPHFTLHDGPPYANGNIHVGHAMNKISKDIIVRSKSMSGFYAPFIPGWDTHGLPIEQVLSKQGVKRKEMDLVEYLKLCREYALSQVDKQREDFKRLGVSGDWENPYVTLTPDYEAAQIRVFGEMANKGYIYRGAKPVYWSWSSESALAEAEIEYHDLVSTSLYYANKVKDGKGVLDTDTYIVVWTTTPFTITASRGLTVGADIDYVLVQPVGEARKFVVAAELLTSLSEKFGWADVQVLETYRGQELNHIVTEHPWDTAVEELVILGDHVTTDSGTGIVHTAPGFGEDDYNVGIANNLEVAVTVDERGIMMKNAGPEFEGQFYEKVVPTVIEKLGNLLLAQEEISHSYPFDWRTKKPIIWRAVPQWFASVSKFRQEILDEIEKVKFHSEWGKVRLYNMIRDRGDWVISRQRTWGVPLPIFYAEDGTAIMVAETIEHVAQLFEKHGSSIWWERDAKDLLPEGFTHPGSPNGEFKKETDIMDVWFDSGSSWNGVVVNRPELTYPADLYLEGSDQYRGWFNSSLITSVANHGVAPYKQILSQGFALDGKGEKMSKSLGNTIAPSDVEKQFGAEILRLWVTSVDSSNDVRISMDILSQVSETYRKIRNTLRFLIANTSDFNPAQDTVAYDELRSVDKYMTIRFNQLVKTIRDAYADFEFLTIYKALVNFINVDLSAFYLDFAKDVVYIEGAKSLERRQMQTVFYDILVKITKLLTPILPHTAEEIWSYLEFETEDFVQLSELPEVQTFANQEEILDTWAAFMDFRGQAQKALEEARNAKVIGKSLEAHLTVYPNEVVKTLLEAVNSNVAQLLIVSELTIAEEPAPEAALSFEDVAFTVERAAGEVCDRCRRIDPTTAERSYQAVICDHCASIVEENFADAVAEGFEEK</sequence>
<comment type="function">
    <text evidence="1">Catalyzes the attachment of isoleucine to tRNA(Ile). As IleRS can inadvertently accommodate and process structurally similar amino acids such as valine, to avoid such errors it has two additional distinct tRNA(Ile)-dependent editing activities. One activity is designated as 'pretransfer' editing and involves the hydrolysis of activated Val-AMP. The other activity is designated 'posttransfer' editing and involves deacylation of mischarged Val-tRNA(Ile).</text>
</comment>
<comment type="catalytic activity">
    <reaction evidence="1">
        <text>tRNA(Ile) + L-isoleucine + ATP = L-isoleucyl-tRNA(Ile) + AMP + diphosphate</text>
        <dbReference type="Rhea" id="RHEA:11060"/>
        <dbReference type="Rhea" id="RHEA-COMP:9666"/>
        <dbReference type="Rhea" id="RHEA-COMP:9695"/>
        <dbReference type="ChEBI" id="CHEBI:30616"/>
        <dbReference type="ChEBI" id="CHEBI:33019"/>
        <dbReference type="ChEBI" id="CHEBI:58045"/>
        <dbReference type="ChEBI" id="CHEBI:78442"/>
        <dbReference type="ChEBI" id="CHEBI:78528"/>
        <dbReference type="ChEBI" id="CHEBI:456215"/>
        <dbReference type="EC" id="6.1.1.5"/>
    </reaction>
</comment>
<comment type="cofactor">
    <cofactor evidence="1">
        <name>Zn(2+)</name>
        <dbReference type="ChEBI" id="CHEBI:29105"/>
    </cofactor>
    <text evidence="1">Binds 1 zinc ion per subunit.</text>
</comment>
<comment type="subunit">
    <text evidence="1">Monomer.</text>
</comment>
<comment type="subcellular location">
    <subcellularLocation>
        <location evidence="1">Cytoplasm</location>
    </subcellularLocation>
</comment>
<comment type="domain">
    <text evidence="1">IleRS has two distinct active sites: one for aminoacylation and one for editing. The misactivated valine is translocated from the active site to the editing site, which sterically excludes the correctly activated isoleucine. The single editing site contains two valyl binding pockets, one specific for each substrate (Val-AMP or Val-tRNA(Ile)).</text>
</comment>
<comment type="similarity">
    <text evidence="1">Belongs to the class-I aminoacyl-tRNA synthetase family. IleS type 1 subfamily.</text>
</comment>
<accession>B5E709</accession>
<accession>Q9ZHB3</accession>
<name>SYI_STRP4</name>
<keyword id="KW-0030">Aminoacyl-tRNA synthetase</keyword>
<keyword id="KW-0067">ATP-binding</keyword>
<keyword id="KW-0963">Cytoplasm</keyword>
<keyword id="KW-0436">Ligase</keyword>
<keyword id="KW-0479">Metal-binding</keyword>
<keyword id="KW-0547">Nucleotide-binding</keyword>
<keyword id="KW-0648">Protein biosynthesis</keyword>
<keyword id="KW-0862">Zinc</keyword>
<dbReference type="EC" id="6.1.1.5" evidence="1"/>
<dbReference type="EMBL" id="AF068901">
    <property type="protein sequence ID" value="AAC95446.1"/>
    <property type="molecule type" value="Genomic_DNA"/>
</dbReference>
<dbReference type="EMBL" id="CP001015">
    <property type="protein sequence ID" value="ACF56356.1"/>
    <property type="molecule type" value="Genomic_DNA"/>
</dbReference>
<dbReference type="SMR" id="B5E709"/>
<dbReference type="KEGG" id="spx:SPG_1568"/>
<dbReference type="HOGENOM" id="CLU_001493_7_1_9"/>
<dbReference type="GO" id="GO:0005829">
    <property type="term" value="C:cytosol"/>
    <property type="evidence" value="ECO:0007669"/>
    <property type="project" value="TreeGrafter"/>
</dbReference>
<dbReference type="GO" id="GO:0002161">
    <property type="term" value="F:aminoacyl-tRNA deacylase activity"/>
    <property type="evidence" value="ECO:0007669"/>
    <property type="project" value="InterPro"/>
</dbReference>
<dbReference type="GO" id="GO:0005524">
    <property type="term" value="F:ATP binding"/>
    <property type="evidence" value="ECO:0007669"/>
    <property type="project" value="UniProtKB-UniRule"/>
</dbReference>
<dbReference type="GO" id="GO:0004822">
    <property type="term" value="F:isoleucine-tRNA ligase activity"/>
    <property type="evidence" value="ECO:0007669"/>
    <property type="project" value="UniProtKB-UniRule"/>
</dbReference>
<dbReference type="GO" id="GO:0000049">
    <property type="term" value="F:tRNA binding"/>
    <property type="evidence" value="ECO:0007669"/>
    <property type="project" value="InterPro"/>
</dbReference>
<dbReference type="GO" id="GO:0008270">
    <property type="term" value="F:zinc ion binding"/>
    <property type="evidence" value="ECO:0007669"/>
    <property type="project" value="UniProtKB-UniRule"/>
</dbReference>
<dbReference type="GO" id="GO:0006428">
    <property type="term" value="P:isoleucyl-tRNA aminoacylation"/>
    <property type="evidence" value="ECO:0007669"/>
    <property type="project" value="UniProtKB-UniRule"/>
</dbReference>
<dbReference type="CDD" id="cd07960">
    <property type="entry name" value="Anticodon_Ia_Ile_BEm"/>
    <property type="match status" value="1"/>
</dbReference>
<dbReference type="CDD" id="cd00818">
    <property type="entry name" value="IleRS_core"/>
    <property type="match status" value="1"/>
</dbReference>
<dbReference type="FunFam" id="1.10.10.830:FF:000001">
    <property type="entry name" value="Isoleucine--tRNA ligase"/>
    <property type="match status" value="1"/>
</dbReference>
<dbReference type="FunFam" id="1.10.730.20:FF:000001">
    <property type="entry name" value="Isoleucine--tRNA ligase"/>
    <property type="match status" value="1"/>
</dbReference>
<dbReference type="FunFam" id="3.40.50.620:FF:000092">
    <property type="entry name" value="Isoleucine--tRNA ligase"/>
    <property type="match status" value="1"/>
</dbReference>
<dbReference type="FunFam" id="3.90.740.10:FF:000006">
    <property type="entry name" value="Isoleucine--tRNA ligase"/>
    <property type="match status" value="1"/>
</dbReference>
<dbReference type="Gene3D" id="1.10.730.20">
    <property type="match status" value="1"/>
</dbReference>
<dbReference type="Gene3D" id="3.40.50.620">
    <property type="entry name" value="HUPs"/>
    <property type="match status" value="2"/>
</dbReference>
<dbReference type="Gene3D" id="1.10.10.830">
    <property type="entry name" value="Ile-tRNA synthetase CP2 domain-like"/>
    <property type="match status" value="1"/>
</dbReference>
<dbReference type="Gene3D" id="3.90.740.10">
    <property type="entry name" value="Valyl/Leucyl/Isoleucyl-tRNA synthetase, editing domain"/>
    <property type="match status" value="1"/>
</dbReference>
<dbReference type="HAMAP" id="MF_02002">
    <property type="entry name" value="Ile_tRNA_synth_type1"/>
    <property type="match status" value="1"/>
</dbReference>
<dbReference type="InterPro" id="IPR001412">
    <property type="entry name" value="aa-tRNA-synth_I_CS"/>
</dbReference>
<dbReference type="InterPro" id="IPR002300">
    <property type="entry name" value="aa-tRNA-synth_Ia"/>
</dbReference>
<dbReference type="InterPro" id="IPR033708">
    <property type="entry name" value="Anticodon_Ile_BEm"/>
</dbReference>
<dbReference type="InterPro" id="IPR002301">
    <property type="entry name" value="Ile-tRNA-ligase"/>
</dbReference>
<dbReference type="InterPro" id="IPR023585">
    <property type="entry name" value="Ile-tRNA-ligase_type1"/>
</dbReference>
<dbReference type="InterPro" id="IPR050081">
    <property type="entry name" value="Ile-tRNA_ligase"/>
</dbReference>
<dbReference type="InterPro" id="IPR013155">
    <property type="entry name" value="M/V/L/I-tRNA-synth_anticd-bd"/>
</dbReference>
<dbReference type="InterPro" id="IPR014729">
    <property type="entry name" value="Rossmann-like_a/b/a_fold"/>
</dbReference>
<dbReference type="InterPro" id="IPR009080">
    <property type="entry name" value="tRNAsynth_Ia_anticodon-bd"/>
</dbReference>
<dbReference type="InterPro" id="IPR009008">
    <property type="entry name" value="Val/Leu/Ile-tRNA-synth_edit"/>
</dbReference>
<dbReference type="InterPro" id="IPR010663">
    <property type="entry name" value="Znf_FPG/IleRS"/>
</dbReference>
<dbReference type="NCBIfam" id="TIGR00392">
    <property type="entry name" value="ileS"/>
    <property type="match status" value="1"/>
</dbReference>
<dbReference type="PANTHER" id="PTHR42765:SF1">
    <property type="entry name" value="ISOLEUCINE--TRNA LIGASE, MITOCHONDRIAL"/>
    <property type="match status" value="1"/>
</dbReference>
<dbReference type="PANTHER" id="PTHR42765">
    <property type="entry name" value="SOLEUCYL-TRNA SYNTHETASE"/>
    <property type="match status" value="1"/>
</dbReference>
<dbReference type="Pfam" id="PF08264">
    <property type="entry name" value="Anticodon_1"/>
    <property type="match status" value="1"/>
</dbReference>
<dbReference type="Pfam" id="PF00133">
    <property type="entry name" value="tRNA-synt_1"/>
    <property type="match status" value="1"/>
</dbReference>
<dbReference type="Pfam" id="PF06827">
    <property type="entry name" value="zf-FPG_IleRS"/>
    <property type="match status" value="1"/>
</dbReference>
<dbReference type="PRINTS" id="PR00984">
    <property type="entry name" value="TRNASYNTHILE"/>
</dbReference>
<dbReference type="SUPFAM" id="SSF47323">
    <property type="entry name" value="Anticodon-binding domain of a subclass of class I aminoacyl-tRNA synthetases"/>
    <property type="match status" value="1"/>
</dbReference>
<dbReference type="SUPFAM" id="SSF52374">
    <property type="entry name" value="Nucleotidylyl transferase"/>
    <property type="match status" value="1"/>
</dbReference>
<dbReference type="SUPFAM" id="SSF50677">
    <property type="entry name" value="ValRS/IleRS/LeuRS editing domain"/>
    <property type="match status" value="1"/>
</dbReference>
<dbReference type="PROSITE" id="PS00178">
    <property type="entry name" value="AA_TRNA_LIGASE_I"/>
    <property type="match status" value="1"/>
</dbReference>